<comment type="function">
    <text>Sillucin is an antimicrobial agent produced by the thermophilic fungus Rhizomucor pusillus in liquid culture; it is effective against Gram-positive bacteria at the level of RNA metabolism.</text>
</comment>
<comment type="subcellular location">
    <subcellularLocation>
        <location>Secreted</location>
    </subcellularLocation>
</comment>
<feature type="peptide" id="PRO_0000044219" description="Sillucin">
    <location>
        <begin position="1"/>
        <end position="30"/>
    </location>
</feature>
<feature type="disulfide bond" evidence="1">
    <location>
        <begin position="2"/>
        <end position="7"/>
    </location>
</feature>
<feature type="disulfide bond" evidence="1">
    <location>
        <begin position="12"/>
        <end position="24"/>
    </location>
</feature>
<feature type="disulfide bond" evidence="1">
    <location>
        <begin position="13"/>
        <end position="30"/>
    </location>
</feature>
<feature type="disulfide bond" evidence="1">
    <location>
        <begin position="14"/>
        <end position="21"/>
    </location>
</feature>
<protein>
    <recommendedName>
        <fullName>Sillucin</fullName>
    </recommendedName>
</protein>
<keyword id="KW-0044">Antibiotic</keyword>
<keyword id="KW-0929">Antimicrobial</keyword>
<keyword id="KW-0903">Direct protein sequencing</keyword>
<keyword id="KW-1015">Disulfide bond</keyword>
<keyword id="KW-0964">Secreted</keyword>
<dbReference type="PIR" id="A03380">
    <property type="entry name" value="SNUMP"/>
</dbReference>
<dbReference type="GO" id="GO:0005576">
    <property type="term" value="C:extracellular region"/>
    <property type="evidence" value="ECO:0007669"/>
    <property type="project" value="UniProtKB-SubCell"/>
</dbReference>
<dbReference type="GO" id="GO:0042742">
    <property type="term" value="P:defense response to bacterium"/>
    <property type="evidence" value="ECO:0007669"/>
    <property type="project" value="UniProtKB-KW"/>
</dbReference>
<proteinExistence type="evidence at protein level"/>
<accession>P02885</accession>
<reference key="1">
    <citation type="journal article" date="1979" name="FEBS Lett.">
        <title>The primary structure of sillucin and antimicrobial peptide from Mucor pusillus.</title>
        <authorList>
            <person name="Bradley W.A."/>
            <person name="Somkuti G.A."/>
        </authorList>
    </citation>
    <scope>PROTEIN SEQUENCE</scope>
</reference>
<reference key="2">
    <citation type="journal article" date="2001" name="Biochemistry">
        <title>Determination of the disulfide structure of sillucin, a highly knotted, cysteine-rich peptide, by cyanylation/cleavage mass mapping.</title>
        <authorList>
            <person name="Qi J."/>
            <person name="Wu J."/>
            <person name="Somkuti G.A."/>
            <person name="Watson J.T."/>
        </authorList>
    </citation>
    <scope>DISULFIDE BONDS</scope>
</reference>
<evidence type="ECO:0000269" key="1">
    <source>
    </source>
</evidence>
<sequence>ACLPNSCVSKGCCCGBSGYWCRQCGIKYTC</sequence>
<name>SILU_RHIPU</name>
<organism>
    <name type="scientific">Rhizomucor pusillus</name>
    <dbReference type="NCBI Taxonomy" id="4840"/>
    <lineage>
        <taxon>Eukaryota</taxon>
        <taxon>Fungi</taxon>
        <taxon>Fungi incertae sedis</taxon>
        <taxon>Mucoromycota</taxon>
        <taxon>Mucoromycotina</taxon>
        <taxon>Mucoromycetes</taxon>
        <taxon>Mucorales</taxon>
        <taxon>Lichtheimiaceae</taxon>
        <taxon>Rhizomucor</taxon>
    </lineage>
</organism>